<sequence length="520" mass="55967">MAHPSGSGGTSFAPTPTHPHHLSRETSRDELEMAESLRLLNQTHDHQKPRAEATSQEQQQQQQQQQQQQQQQQQQQQQQHAQEDPRSEIYHSLEDAVPIADGPPTPSTAASLQIPNMNYETPNASITGQVCSNCKTTQTPLWRRSPAGETVCNACGLYMKARNQSRPVNLKRNTQTQPTMSVQQSPTPGSTDGSRTCAGNVAGSPRVATYVAADQMAAGTCPGGGRCNGTGGQQGCSGCPAFNNRVSKTAKFALAQANAAPGENRGGSDAASSTSAASASTSAIPACQNCGTTITPLWRRDDAGHIICNACGLYYKLHGTHRPVAMKKQEIKRRKRIVPAADTSSQAPSSVANYSPPQRPSQTPAFEHSVSPDPSTALESREAYTPEPPRGPIAVDFTHYYSNSSVTSNPVALTPTVQPSAPSPRKRSRSATLDPEEPVNPLPHRPNAISAILNPSQTEVDANIDPSLSVPLRTSGGTSPNFTLSPEEKAAKRERLKREAEAMRLELERRQKELEELEND</sequence>
<evidence type="ECO:0000250" key="1">
    <source>
        <dbReference type="UniProtKB" id="Q1K8E7"/>
    </source>
</evidence>
<evidence type="ECO:0000255" key="2"/>
<evidence type="ECO:0000255" key="3">
    <source>
        <dbReference type="PROSITE-ProRule" id="PRU00094"/>
    </source>
</evidence>
<evidence type="ECO:0000256" key="4">
    <source>
        <dbReference type="SAM" id="MobiDB-lite"/>
    </source>
</evidence>
<evidence type="ECO:0000269" key="5">
    <source>
    </source>
</evidence>
<evidence type="ECO:0000303" key="6">
    <source>
    </source>
</evidence>
<evidence type="ECO:0000305" key="7"/>
<name>SREA_COCH4</name>
<comment type="function">
    <text evidence="5">GATA-type transcription repressor that regulates iron- acquisition genes through specific binding the GATA sequence elements of target promoters (PubMed:23980626). SRE1 targets repressed under iron-replete conditions include genes encoding a number of key iron-regulated factors such as those involved in siderophore biosynthesis NPS6, SIDA2 and ABC6, as well as the high-affinity iron permease FTR1, the catalase CAT1, and the superoxide dismutase SOD1 encoding genes (PubMed:23980626).</text>
</comment>
<comment type="subcellular location">
    <subcellularLocation>
        <location evidence="7">Nucleus</location>
    </subcellularLocation>
</comment>
<comment type="domain">
    <text evidence="1">The conserved cystein-rich region (CRR) localized between the zinc fingers is also involved in DNA-binding and transcription repressor activity (By similarity).</text>
</comment>
<comment type="disruption phenotype">
    <text evidence="5">Impairs the repression of siderophore biosynthesis and utilization genes in the presence of abundant iron and thus produces siderophores even under iron-replete conditions (PubMed:23980626).</text>
</comment>
<keyword id="KW-0175">Coiled coil</keyword>
<keyword id="KW-0479">Metal-binding</keyword>
<keyword id="KW-0539">Nucleus</keyword>
<keyword id="KW-0677">Repeat</keyword>
<keyword id="KW-0804">Transcription</keyword>
<keyword id="KW-0805">Transcription regulation</keyword>
<keyword id="KW-0862">Zinc</keyword>
<keyword id="KW-0863">Zinc-finger</keyword>
<protein>
    <recommendedName>
        <fullName evidence="6">GATA-type transcription factor SRE1</fullName>
    </recommendedName>
    <alternativeName>
        <fullName evidence="6">Siderophore uptake regulator SRE1</fullName>
    </alternativeName>
</protein>
<reference key="1">
    <citation type="journal article" date="2012" name="PLoS Pathog.">
        <title>Diverse lifestyles and strategies of plant pathogenesis encoded in the genomes of eighteen Dothideomycetes fungi.</title>
        <authorList>
            <person name="Ohm R.A."/>
            <person name="Feau N."/>
            <person name="Henrissat B."/>
            <person name="Schoch C.L."/>
            <person name="Horwitz B.A."/>
            <person name="Barry K.W."/>
            <person name="Condon B.J."/>
            <person name="Copeland A.C."/>
            <person name="Dhillon B."/>
            <person name="Glaser F."/>
            <person name="Hesse C.N."/>
            <person name="Kosti I."/>
            <person name="LaButti K."/>
            <person name="Lindquist E.A."/>
            <person name="Lucas S."/>
            <person name="Salamov A.A."/>
            <person name="Bradshaw R.E."/>
            <person name="Ciuffetti L."/>
            <person name="Hamelin R.C."/>
            <person name="Kema G.H.J."/>
            <person name="Lawrence C."/>
            <person name="Scott J.A."/>
            <person name="Spatafora J.W."/>
            <person name="Turgeon B.G."/>
            <person name="de Wit P.J.G.M."/>
            <person name="Zhong S."/>
            <person name="Goodwin S.B."/>
            <person name="Grigoriev I.V."/>
        </authorList>
    </citation>
    <scope>NUCLEOTIDE SEQUENCE [LARGE SCALE GENOMIC DNA]</scope>
    <source>
        <strain>C4 / ATCC 48331 / race T</strain>
    </source>
</reference>
<reference key="2">
    <citation type="journal article" date="2013" name="PLoS Genet.">
        <title>Comparative genome structure, secondary metabolite, and effector coding capacity across Cochliobolus pathogens.</title>
        <authorList>
            <person name="Condon B.J."/>
            <person name="Leng Y."/>
            <person name="Wu D."/>
            <person name="Bushley K.E."/>
            <person name="Ohm R.A."/>
            <person name="Otillar R."/>
            <person name="Martin J."/>
            <person name="Schackwitz W."/>
            <person name="Grimwood J."/>
            <person name="MohdZainudin N."/>
            <person name="Xue C."/>
            <person name="Wang R."/>
            <person name="Manning V.A."/>
            <person name="Dhillon B."/>
            <person name="Tu Z.J."/>
            <person name="Steffenson B.J."/>
            <person name="Salamov A."/>
            <person name="Sun H."/>
            <person name="Lowry S."/>
            <person name="LaButti K."/>
            <person name="Han J."/>
            <person name="Copeland A."/>
            <person name="Lindquist E."/>
            <person name="Barry K."/>
            <person name="Schmutz J."/>
            <person name="Baker S.E."/>
            <person name="Ciuffetti L.M."/>
            <person name="Grigoriev I.V."/>
            <person name="Zhong S."/>
            <person name="Turgeon B.G."/>
        </authorList>
    </citation>
    <scope>NUCLEOTIDE SEQUENCE [LARGE SCALE GENOMIC DNA]</scope>
    <source>
        <strain>C4 / ATCC 48331 / race T</strain>
    </source>
</reference>
<reference key="3">
    <citation type="journal article" date="2013" name="Mol. Plant Microbe Interact.">
        <title>Iron, oxidative stress, and virulence: roles of iron-sensitive transcription factor Sre1 and the redox sensor ChAp1 in the maize pathogen Cochliobolus heterostrophus.</title>
        <authorList>
            <person name="Zhang N."/>
            <person name="MohdZainudin N.A."/>
            <person name="Scher K."/>
            <person name="Condon B.J."/>
            <person name="Horwitz B.A."/>
            <person name="Turgeon B.G."/>
        </authorList>
    </citation>
    <scope>FUNCTION</scope>
    <scope>DISRUPTION PHENOTYPE</scope>
</reference>
<dbReference type="EMBL" id="KB733452">
    <property type="protein sequence ID" value="ENI06272.1"/>
    <property type="molecule type" value="Genomic_DNA"/>
</dbReference>
<dbReference type="RefSeq" id="XP_014080181.1">
    <property type="nucleotide sequence ID" value="XM_014224706.1"/>
</dbReference>
<dbReference type="GeneID" id="25837414"/>
<dbReference type="HOGENOM" id="CLU_021761_0_1_1"/>
<dbReference type="OrthoDB" id="515401at2759"/>
<dbReference type="PHI-base" id="PHI:3837"/>
<dbReference type="Proteomes" id="UP000012338">
    <property type="component" value="Unassembled WGS sequence"/>
</dbReference>
<dbReference type="GO" id="GO:0005634">
    <property type="term" value="C:nucleus"/>
    <property type="evidence" value="ECO:0007669"/>
    <property type="project" value="UniProtKB-SubCell"/>
</dbReference>
<dbReference type="GO" id="GO:0000981">
    <property type="term" value="F:DNA-binding transcription factor activity, RNA polymerase II-specific"/>
    <property type="evidence" value="ECO:0007669"/>
    <property type="project" value="TreeGrafter"/>
</dbReference>
<dbReference type="GO" id="GO:0000978">
    <property type="term" value="F:RNA polymerase II cis-regulatory region sequence-specific DNA binding"/>
    <property type="evidence" value="ECO:0007669"/>
    <property type="project" value="TreeGrafter"/>
</dbReference>
<dbReference type="GO" id="GO:0008270">
    <property type="term" value="F:zinc ion binding"/>
    <property type="evidence" value="ECO:0007669"/>
    <property type="project" value="UniProtKB-KW"/>
</dbReference>
<dbReference type="GO" id="GO:0045165">
    <property type="term" value="P:cell fate commitment"/>
    <property type="evidence" value="ECO:0007669"/>
    <property type="project" value="TreeGrafter"/>
</dbReference>
<dbReference type="GO" id="GO:0000122">
    <property type="term" value="P:negative regulation of transcription by RNA polymerase II"/>
    <property type="evidence" value="ECO:0007669"/>
    <property type="project" value="TreeGrafter"/>
</dbReference>
<dbReference type="GO" id="GO:0045944">
    <property type="term" value="P:positive regulation of transcription by RNA polymerase II"/>
    <property type="evidence" value="ECO:0007669"/>
    <property type="project" value="TreeGrafter"/>
</dbReference>
<dbReference type="CDD" id="cd00202">
    <property type="entry name" value="ZnF_GATA"/>
    <property type="match status" value="2"/>
</dbReference>
<dbReference type="FunFam" id="3.30.50.10:FF:000007">
    <property type="entry name" value="Nitrogen regulatory AreA, N-terminal"/>
    <property type="match status" value="1"/>
</dbReference>
<dbReference type="FunFam" id="3.30.50.10:FF:000039">
    <property type="entry name" value="Siderophore transcription factor SreA"/>
    <property type="match status" value="1"/>
</dbReference>
<dbReference type="Gene3D" id="3.30.50.10">
    <property type="entry name" value="Erythroid Transcription Factor GATA-1, subunit A"/>
    <property type="match status" value="2"/>
</dbReference>
<dbReference type="InterPro" id="IPR039355">
    <property type="entry name" value="Transcription_factor_GATA"/>
</dbReference>
<dbReference type="InterPro" id="IPR000679">
    <property type="entry name" value="Znf_GATA"/>
</dbReference>
<dbReference type="InterPro" id="IPR013088">
    <property type="entry name" value="Znf_NHR/GATA"/>
</dbReference>
<dbReference type="PANTHER" id="PTHR10071:SF281">
    <property type="entry name" value="BOX A-BINDING FACTOR-RELATED"/>
    <property type="match status" value="1"/>
</dbReference>
<dbReference type="PANTHER" id="PTHR10071">
    <property type="entry name" value="TRANSCRIPTION FACTOR GATA FAMILY MEMBER"/>
    <property type="match status" value="1"/>
</dbReference>
<dbReference type="Pfam" id="PF00320">
    <property type="entry name" value="GATA"/>
    <property type="match status" value="2"/>
</dbReference>
<dbReference type="PRINTS" id="PR00619">
    <property type="entry name" value="GATAZNFINGER"/>
</dbReference>
<dbReference type="SMART" id="SM00401">
    <property type="entry name" value="ZnF_GATA"/>
    <property type="match status" value="2"/>
</dbReference>
<dbReference type="SUPFAM" id="SSF57716">
    <property type="entry name" value="Glucocorticoid receptor-like (DNA-binding domain)"/>
    <property type="match status" value="2"/>
</dbReference>
<dbReference type="PROSITE" id="PS00344">
    <property type="entry name" value="GATA_ZN_FINGER_1"/>
    <property type="match status" value="2"/>
</dbReference>
<dbReference type="PROSITE" id="PS50114">
    <property type="entry name" value="GATA_ZN_FINGER_2"/>
    <property type="match status" value="2"/>
</dbReference>
<feature type="chain" id="PRO_0000444404" description="GATA-type transcription factor SRE1">
    <location>
        <begin position="1"/>
        <end position="520"/>
    </location>
</feature>
<feature type="zinc finger region" description="GATA-type 1" evidence="3">
    <location>
        <begin position="131"/>
        <end position="155"/>
    </location>
</feature>
<feature type="zinc finger region" description="GATA-type 2" evidence="3">
    <location>
        <begin position="287"/>
        <end position="311"/>
    </location>
</feature>
<feature type="region of interest" description="Disordered" evidence="4">
    <location>
        <begin position="1"/>
        <end position="86"/>
    </location>
</feature>
<feature type="region of interest" description="Disordered" evidence="4">
    <location>
        <begin position="168"/>
        <end position="199"/>
    </location>
</feature>
<feature type="region of interest" description="Cystein-rich region (CRR)" evidence="1">
    <location>
        <begin position="221"/>
        <end position="239"/>
    </location>
</feature>
<feature type="region of interest" description="Disordered" evidence="4">
    <location>
        <begin position="326"/>
        <end position="391"/>
    </location>
</feature>
<feature type="region of interest" description="Disordered" evidence="4">
    <location>
        <begin position="406"/>
        <end position="447"/>
    </location>
</feature>
<feature type="region of interest" description="Disordered" evidence="4">
    <location>
        <begin position="467"/>
        <end position="495"/>
    </location>
</feature>
<feature type="coiled-coil region" evidence="2">
    <location>
        <begin position="486"/>
        <end position="520"/>
    </location>
</feature>
<feature type="compositionally biased region" description="Basic and acidic residues" evidence="4">
    <location>
        <begin position="22"/>
        <end position="31"/>
    </location>
</feature>
<feature type="compositionally biased region" description="Low complexity" evidence="4">
    <location>
        <begin position="58"/>
        <end position="79"/>
    </location>
</feature>
<feature type="compositionally biased region" description="Polar residues" evidence="4">
    <location>
        <begin position="168"/>
        <end position="194"/>
    </location>
</feature>
<feature type="compositionally biased region" description="Basic residues" evidence="4">
    <location>
        <begin position="326"/>
        <end position="337"/>
    </location>
</feature>
<feature type="compositionally biased region" description="Polar residues" evidence="4">
    <location>
        <begin position="342"/>
        <end position="364"/>
    </location>
</feature>
<feature type="compositionally biased region" description="Polar residues" evidence="4">
    <location>
        <begin position="406"/>
        <end position="418"/>
    </location>
</feature>
<feature type="compositionally biased region" description="Polar residues" evidence="4">
    <location>
        <begin position="475"/>
        <end position="484"/>
    </location>
</feature>
<feature type="compositionally biased region" description="Basic and acidic residues" evidence="4">
    <location>
        <begin position="486"/>
        <end position="495"/>
    </location>
</feature>
<proteinExistence type="inferred from homology"/>
<gene>
    <name evidence="6" type="primary">SRE1</name>
    <name type="ORF">COCC4DRAFT_135674</name>
</gene>
<organism>
    <name type="scientific">Cochliobolus heterostrophus (strain C4 / ATCC 48331 / race T)</name>
    <name type="common">Southern corn leaf blight fungus</name>
    <name type="synonym">Bipolaris maydis</name>
    <dbReference type="NCBI Taxonomy" id="665024"/>
    <lineage>
        <taxon>Eukaryota</taxon>
        <taxon>Fungi</taxon>
        <taxon>Dikarya</taxon>
        <taxon>Ascomycota</taxon>
        <taxon>Pezizomycotina</taxon>
        <taxon>Dothideomycetes</taxon>
        <taxon>Pleosporomycetidae</taxon>
        <taxon>Pleosporales</taxon>
        <taxon>Pleosporineae</taxon>
        <taxon>Pleosporaceae</taxon>
        <taxon>Bipolaris</taxon>
    </lineage>
</organism>
<accession>N4XMB0</accession>